<accession>A6VGZ7</accession>
<sequence>MAIKGPRKHLKRLAAPANWQLPRKVKAFTVRPSPGPHSMDKSLPLLLVVRDVLKYADNAREAKKIIQTGKILIDGLKRKEYKHPAGLMDVLSIPEMDENYLVLFDESGRISLKKTDKTDAKLCKIVNKTVIKGGHIQLNLHDGRNQIVKVSDATKAEEDVYKTGDSVLVSIPEQSIVGHVAFGEGKLAYVTGGKHVGEFAKIVEVENRALYSDIVTLENKDGEKFKTVKPYVFIVGQDEPVISM</sequence>
<comment type="similarity">
    <text evidence="1">Belongs to the eukaryotic ribosomal protein eS4 family.</text>
</comment>
<keyword id="KW-0687">Ribonucleoprotein</keyword>
<keyword id="KW-0689">Ribosomal protein</keyword>
<keyword id="KW-0694">RNA-binding</keyword>
<keyword id="KW-0699">rRNA-binding</keyword>
<evidence type="ECO:0000255" key="1">
    <source>
        <dbReference type="HAMAP-Rule" id="MF_00485"/>
    </source>
</evidence>
<evidence type="ECO:0000305" key="2"/>
<feature type="chain" id="PRO_1000081340" description="Small ribosomal subunit protein eS4">
    <location>
        <begin position="1"/>
        <end position="244"/>
    </location>
</feature>
<feature type="domain" description="S4 RNA-binding" evidence="1">
    <location>
        <begin position="43"/>
        <end position="106"/>
    </location>
</feature>
<organism>
    <name type="scientific">Methanococcus maripaludis (strain C7 / ATCC BAA-1331)</name>
    <dbReference type="NCBI Taxonomy" id="426368"/>
    <lineage>
        <taxon>Archaea</taxon>
        <taxon>Methanobacteriati</taxon>
        <taxon>Methanobacteriota</taxon>
        <taxon>Methanomada group</taxon>
        <taxon>Methanococci</taxon>
        <taxon>Methanococcales</taxon>
        <taxon>Methanococcaceae</taxon>
        <taxon>Methanococcus</taxon>
    </lineage>
</organism>
<proteinExistence type="inferred from homology"/>
<gene>
    <name evidence="1" type="primary">rps4e</name>
    <name type="ordered locus">MmarC7_0656</name>
</gene>
<dbReference type="EMBL" id="CP000745">
    <property type="protein sequence ID" value="ABR65723.1"/>
    <property type="molecule type" value="Genomic_DNA"/>
</dbReference>
<dbReference type="SMR" id="A6VGZ7"/>
<dbReference type="STRING" id="426368.MmarC7_0656"/>
<dbReference type="KEGG" id="mmz:MmarC7_0656"/>
<dbReference type="eggNOG" id="arCOG04093">
    <property type="taxonomic scope" value="Archaea"/>
</dbReference>
<dbReference type="HOGENOM" id="CLU_060400_0_0_2"/>
<dbReference type="OrthoDB" id="372073at2157"/>
<dbReference type="GO" id="GO:0022627">
    <property type="term" value="C:cytosolic small ribosomal subunit"/>
    <property type="evidence" value="ECO:0007669"/>
    <property type="project" value="TreeGrafter"/>
</dbReference>
<dbReference type="GO" id="GO:0019843">
    <property type="term" value="F:rRNA binding"/>
    <property type="evidence" value="ECO:0007669"/>
    <property type="project" value="UniProtKB-KW"/>
</dbReference>
<dbReference type="GO" id="GO:0003735">
    <property type="term" value="F:structural constituent of ribosome"/>
    <property type="evidence" value="ECO:0007669"/>
    <property type="project" value="InterPro"/>
</dbReference>
<dbReference type="GO" id="GO:0006412">
    <property type="term" value="P:translation"/>
    <property type="evidence" value="ECO:0007669"/>
    <property type="project" value="UniProtKB-UniRule"/>
</dbReference>
<dbReference type="CDD" id="cd06087">
    <property type="entry name" value="KOW_RPS4"/>
    <property type="match status" value="1"/>
</dbReference>
<dbReference type="CDD" id="cd00165">
    <property type="entry name" value="S4"/>
    <property type="match status" value="1"/>
</dbReference>
<dbReference type="FunFam" id="3.10.290.10:FF:000002">
    <property type="entry name" value="40S ribosomal protein S4"/>
    <property type="match status" value="1"/>
</dbReference>
<dbReference type="Gene3D" id="2.30.30.30">
    <property type="match status" value="1"/>
</dbReference>
<dbReference type="Gene3D" id="2.40.50.740">
    <property type="match status" value="1"/>
</dbReference>
<dbReference type="Gene3D" id="3.10.290.10">
    <property type="entry name" value="RNA-binding S4 domain"/>
    <property type="match status" value="1"/>
</dbReference>
<dbReference type="HAMAP" id="MF_00485">
    <property type="entry name" value="Ribosomal_eS4"/>
    <property type="match status" value="1"/>
</dbReference>
<dbReference type="InterPro" id="IPR014722">
    <property type="entry name" value="Rib_uL2_dom2"/>
</dbReference>
<dbReference type="InterPro" id="IPR000876">
    <property type="entry name" value="Ribosomal_eS4"/>
</dbReference>
<dbReference type="InterPro" id="IPR013845">
    <property type="entry name" value="Ribosomal_eS4_central_region"/>
</dbReference>
<dbReference type="InterPro" id="IPR038237">
    <property type="entry name" value="Ribosomal_eS4_central_sf"/>
</dbReference>
<dbReference type="InterPro" id="IPR041982">
    <property type="entry name" value="Ribosomal_eS4_KOW"/>
</dbReference>
<dbReference type="InterPro" id="IPR013843">
    <property type="entry name" value="Ribosomal_eS4_N"/>
</dbReference>
<dbReference type="InterPro" id="IPR018199">
    <property type="entry name" value="Ribosomal_eS4_N_CS"/>
</dbReference>
<dbReference type="InterPro" id="IPR036986">
    <property type="entry name" value="S4_RNA-bd_sf"/>
</dbReference>
<dbReference type="NCBIfam" id="NF003312">
    <property type="entry name" value="PRK04313.1"/>
    <property type="match status" value="1"/>
</dbReference>
<dbReference type="PANTHER" id="PTHR11581">
    <property type="entry name" value="30S/40S RIBOSOMAL PROTEIN S4"/>
    <property type="match status" value="1"/>
</dbReference>
<dbReference type="PANTHER" id="PTHR11581:SF0">
    <property type="entry name" value="SMALL RIBOSOMAL SUBUNIT PROTEIN ES4"/>
    <property type="match status" value="1"/>
</dbReference>
<dbReference type="Pfam" id="PF00900">
    <property type="entry name" value="Ribosomal_S4e"/>
    <property type="match status" value="1"/>
</dbReference>
<dbReference type="Pfam" id="PF08071">
    <property type="entry name" value="RS4NT"/>
    <property type="match status" value="1"/>
</dbReference>
<dbReference type="PIRSF" id="PIRSF002116">
    <property type="entry name" value="Ribosomal_S4"/>
    <property type="match status" value="1"/>
</dbReference>
<dbReference type="PROSITE" id="PS00528">
    <property type="entry name" value="RIBOSOMAL_S4E"/>
    <property type="match status" value="1"/>
</dbReference>
<dbReference type="PROSITE" id="PS50889">
    <property type="entry name" value="S4"/>
    <property type="match status" value="1"/>
</dbReference>
<name>RS4E_METM7</name>
<reference key="1">
    <citation type="submission" date="2007-06" db="EMBL/GenBank/DDBJ databases">
        <title>Complete sequence of Methanococcus maripaludis C7.</title>
        <authorList>
            <consortium name="US DOE Joint Genome Institute"/>
            <person name="Copeland A."/>
            <person name="Lucas S."/>
            <person name="Lapidus A."/>
            <person name="Barry K."/>
            <person name="Glavina del Rio T."/>
            <person name="Dalin E."/>
            <person name="Tice H."/>
            <person name="Pitluck S."/>
            <person name="Clum A."/>
            <person name="Schmutz J."/>
            <person name="Larimer F."/>
            <person name="Land M."/>
            <person name="Hauser L."/>
            <person name="Kyrpides N."/>
            <person name="Anderson I."/>
            <person name="Sieprawska-Lupa M."/>
            <person name="Whitman W.B."/>
            <person name="Richardson P."/>
        </authorList>
    </citation>
    <scope>NUCLEOTIDE SEQUENCE [LARGE SCALE GENOMIC DNA]</scope>
    <source>
        <strain>C7 / ATCC BAA-1331</strain>
    </source>
</reference>
<protein>
    <recommendedName>
        <fullName evidence="1">Small ribosomal subunit protein eS4</fullName>
    </recommendedName>
    <alternativeName>
        <fullName evidence="2">30S ribosomal protein S4e</fullName>
    </alternativeName>
</protein>